<proteinExistence type="evidence at protein level"/>
<evidence type="ECO:0000250" key="1">
    <source>
        <dbReference type="UniProtKB" id="D3VML5"/>
    </source>
</evidence>
<evidence type="ECO:0000269" key="2">
    <source>
    </source>
</evidence>
<evidence type="ECO:0000303" key="3">
    <source>
    </source>
</evidence>
<evidence type="ECO:0000305" key="4"/>
<comment type="function">
    <text evidence="1">Peptide antibiotic inhibiting growth of Gram-positive bacteria. The mode of action appears to be disruption of cell walls and lysis of cells (By similarity).</text>
</comment>
<comment type="subcellular location">
    <subcellularLocation>
        <location evidence="1">Secreted</location>
        <location evidence="1">Cell wall</location>
    </subcellularLocation>
</comment>
<comment type="PTM">
    <text evidence="4">Maturation of thiazole and oxazole containing antibiotics involves the enzymatic condensation of a Cys, Ser or Thr with the alpha-carbonyl of the preceding amino acid to form a thioether or ether bond, then dehydration to form a double bond with the alpha-amino nitrogen. Thiazoline or oxazoline ring are dehydrogenated to form thiazole or oxazole rings.</text>
</comment>
<comment type="mass spectrometry" mass="1336.48" method="Electrospray" evidence="2">
    <text>Plantazolicin A.</text>
</comment>
<dbReference type="EMBL" id="ABRX01000001">
    <property type="protein sequence ID" value="EHD25717.1"/>
    <property type="molecule type" value="Genomic_DNA"/>
</dbReference>
<dbReference type="GO" id="GO:0005576">
    <property type="term" value="C:extracellular region"/>
    <property type="evidence" value="ECO:0007669"/>
    <property type="project" value="UniProtKB-KW"/>
</dbReference>
<dbReference type="GO" id="GO:0042742">
    <property type="term" value="P:defense response to bacterium"/>
    <property type="evidence" value="ECO:0007669"/>
    <property type="project" value="UniProtKB-KW"/>
</dbReference>
<dbReference type="GO" id="GO:0031640">
    <property type="term" value="P:killing of cells of another organism"/>
    <property type="evidence" value="ECO:0007669"/>
    <property type="project" value="UniProtKB-KW"/>
</dbReference>
<dbReference type="InterPro" id="IPR026474">
    <property type="entry name" value="Plantazolicin"/>
</dbReference>
<dbReference type="NCBIfam" id="TIGR04218">
    <property type="entry name" value="TOMM_plantaz"/>
    <property type="match status" value="1"/>
</dbReference>
<organism>
    <name type="scientific">Bacillus pumilus (strain ATCC 7061 / DSM 27 / CCUG 26015 / JCM 2508 / NBRC 12092 / NCIMB 9369 / NCTC 10337 / NRRL NRS-272 / CCM 2144)</name>
    <dbReference type="NCBI Taxonomy" id="536229"/>
    <lineage>
        <taxon>Bacteria</taxon>
        <taxon>Bacillati</taxon>
        <taxon>Bacillota</taxon>
        <taxon>Bacilli</taxon>
        <taxon>Bacillales</taxon>
        <taxon>Bacillaceae</taxon>
        <taxon>Bacillus</taxon>
    </lineage>
</organism>
<keyword id="KW-0044">Antibiotic</keyword>
<keyword id="KW-0929">Antimicrobial</keyword>
<keyword id="KW-0078">Bacteriocin</keyword>
<keyword id="KW-0134">Cell wall</keyword>
<keyword id="KW-0488">Methylation</keyword>
<keyword id="KW-0964">Secreted</keyword>
<keyword id="KW-0883">Thioether bond</keyword>
<gene>
    <name evidence="1" type="primary">pznA</name>
</gene>
<accession>B3A0N7</accession>
<accession>W1JF39</accession>
<name>PZNA_BACPA</name>
<sequence length="41" mass="4368">MTKITIPTALSAKVHGEGQHLFEPMAARCTCTTIISSSSTF</sequence>
<reference evidence="4" key="1">
    <citation type="submission" date="2011-10" db="EMBL/GenBank/DDBJ databases">
        <title>Genome sequence of Bacillus pumilis ATCC 7061.</title>
        <authorList>
            <person name="Dodson R.J."/>
            <person name="Munk A.C."/>
            <person name="Tapia R."/>
            <person name="Green L."/>
            <person name="Rogers Y."/>
            <person name="Detter J.C."/>
            <person name="Bruce D."/>
            <person name="Sutton G."/>
            <person name="Venkateswaran K."/>
            <person name="Fox G."/>
            <person name="Laduc M.T."/>
            <person name="Brettin T.S."/>
        </authorList>
    </citation>
    <scope>NUCLEOTIDE SEQUENCE [LARGE SCALE GENOMIC DNA]</scope>
    <source>
        <strain evidence="4">ATCC 7061 / DSM 27 / CCUG 26015 / JCM 2508 / NBRC 12092 / NCIMB 9369 / NCTC 10337 / NRRL NRS-272 / CCM 2144</strain>
    </source>
</reference>
<reference evidence="4" key="2">
    <citation type="journal article" date="2011" name="ACS Chem. Biol.">
        <title>Structure determination and interception of biosynthetic intermediates for the plantazolicin class of highly discriminating antibiotics.</title>
        <authorList>
            <person name="Molohon K.J."/>
            <person name="Melby J.O."/>
            <person name="Lee J."/>
            <person name="Evans B.S."/>
            <person name="Dunbar K.L."/>
            <person name="Bumpus S.B."/>
            <person name="Kelleher N.L."/>
            <person name="Mitchell D.A."/>
        </authorList>
    </citation>
    <scope>IDENTIFICATION</scope>
    <scope>MASS SPECTROMETRY</scope>
    <source>
        <strain evidence="2">ATCC 7061 / DSM 27 / CCUG 26015 / JCM 2508 / NBRC 12092 / NCIMB 9369 / NCTC 10337 / NRRL NRS-272 / CCM 2144</strain>
    </source>
</reference>
<protein>
    <recommendedName>
        <fullName evidence="3">Plantazolicin</fullName>
        <shortName evidence="3">PZN</shortName>
    </recommendedName>
</protein>
<feature type="propeptide" id="PRO_0000415153" evidence="1">
    <location>
        <begin position="1"/>
        <end position="27"/>
    </location>
</feature>
<feature type="peptide" id="PRO_0000415154" description="Plantazolicin" evidence="1">
    <location>
        <begin position="28"/>
        <end position="41"/>
    </location>
</feature>
<feature type="modified residue" description="N2,N2-dimethylarginine; in form plantazolicin A" evidence="1">
    <location>
        <position position="28"/>
    </location>
</feature>
<feature type="cross-link" description="Thiazole-4-carboxylic acid (Arg-Cys)" evidence="1">
    <location>
        <begin position="28"/>
        <end position="29"/>
    </location>
</feature>
<feature type="cross-link" description="5-methyloxazole-4-carboxylic acid (Cys-Thr)" evidence="1">
    <location>
        <begin position="29"/>
        <end position="30"/>
    </location>
</feature>
<feature type="cross-link" description="Thiazole-4-carboxylic acid (Thr-Cys)" evidence="1">
    <location>
        <begin position="30"/>
        <end position="31"/>
    </location>
</feature>
<feature type="cross-link" description="5-methyloxazole-4-carboxylic acid (Cys-Thr)" evidence="1">
    <location>
        <begin position="31"/>
        <end position="32"/>
    </location>
</feature>
<feature type="cross-link" description="5-methyloxazole-4-carboxylic acid (Thr-Thr)" evidence="1">
    <location>
        <begin position="32"/>
        <end position="33"/>
    </location>
</feature>
<feature type="cross-link" description="Oxazole-4-carboxylic acid (Ile-Ser)" evidence="1">
    <location>
        <begin position="35"/>
        <end position="36"/>
    </location>
</feature>
<feature type="cross-link" description="Oxazole-4-carboxylic acid (Ser-Ser)" evidence="1">
    <location>
        <begin position="36"/>
        <end position="37"/>
    </location>
</feature>
<feature type="cross-link" description="Oxazole-4-carboxylic acid (Ser-Ser)" evidence="1">
    <location>
        <begin position="37"/>
        <end position="38"/>
    </location>
</feature>
<feature type="cross-link" description="Oxazole-4-carboxylic acid (Ser-Ser)" evidence="1">
    <location>
        <begin position="38"/>
        <end position="39"/>
    </location>
</feature>
<feature type="cross-link" description="5-methyloxazoline-4-carboxylic acid (Ser-Thr)" evidence="1">
    <location>
        <begin position="39"/>
        <end position="40"/>
    </location>
</feature>